<comment type="function">
    <text evidence="1">An accessory protein needed during the final step in the assembly of 30S ribosomal subunit, possibly for assembly of the head region. Essential for efficient processing of 16S rRNA. May be needed both before and after RbfA during the maturation of 16S rRNA. It has affinity for free ribosomal 30S subunits but not for 70S ribosomes.</text>
</comment>
<comment type="subunit">
    <text evidence="1">Binds ribosomal protein uS19.</text>
</comment>
<comment type="subcellular location">
    <subcellularLocation>
        <location evidence="1">Cytoplasm</location>
    </subcellularLocation>
</comment>
<comment type="domain">
    <text evidence="1">The PRC barrel domain binds ribosomal protein uS19.</text>
</comment>
<comment type="similarity">
    <text evidence="1">Belongs to the RimM family.</text>
</comment>
<dbReference type="EMBL" id="FM180568">
    <property type="protein sequence ID" value="CAS10445.1"/>
    <property type="molecule type" value="Genomic_DNA"/>
</dbReference>
<dbReference type="RefSeq" id="WP_000043335.1">
    <property type="nucleotide sequence ID" value="NC_011601.1"/>
</dbReference>
<dbReference type="SMR" id="B7UH57"/>
<dbReference type="GeneID" id="93774458"/>
<dbReference type="KEGG" id="ecg:E2348C_2897"/>
<dbReference type="HOGENOM" id="CLU_077636_1_0_6"/>
<dbReference type="Proteomes" id="UP000008205">
    <property type="component" value="Chromosome"/>
</dbReference>
<dbReference type="GO" id="GO:0005737">
    <property type="term" value="C:cytoplasm"/>
    <property type="evidence" value="ECO:0007669"/>
    <property type="project" value="UniProtKB-SubCell"/>
</dbReference>
<dbReference type="GO" id="GO:0005840">
    <property type="term" value="C:ribosome"/>
    <property type="evidence" value="ECO:0007669"/>
    <property type="project" value="InterPro"/>
</dbReference>
<dbReference type="GO" id="GO:0043022">
    <property type="term" value="F:ribosome binding"/>
    <property type="evidence" value="ECO:0007669"/>
    <property type="project" value="InterPro"/>
</dbReference>
<dbReference type="GO" id="GO:0042274">
    <property type="term" value="P:ribosomal small subunit biogenesis"/>
    <property type="evidence" value="ECO:0007669"/>
    <property type="project" value="UniProtKB-UniRule"/>
</dbReference>
<dbReference type="GO" id="GO:0006364">
    <property type="term" value="P:rRNA processing"/>
    <property type="evidence" value="ECO:0007669"/>
    <property type="project" value="UniProtKB-UniRule"/>
</dbReference>
<dbReference type="FunFam" id="2.30.30.240:FF:000001">
    <property type="entry name" value="Ribosome maturation factor RimM"/>
    <property type="match status" value="1"/>
</dbReference>
<dbReference type="FunFam" id="2.40.30.60:FF:000001">
    <property type="entry name" value="Ribosome maturation factor RimM"/>
    <property type="match status" value="1"/>
</dbReference>
<dbReference type="Gene3D" id="2.30.30.240">
    <property type="entry name" value="PRC-barrel domain"/>
    <property type="match status" value="1"/>
</dbReference>
<dbReference type="Gene3D" id="2.40.30.60">
    <property type="entry name" value="RimM"/>
    <property type="match status" value="1"/>
</dbReference>
<dbReference type="HAMAP" id="MF_00014">
    <property type="entry name" value="Ribosome_mat_RimM"/>
    <property type="match status" value="1"/>
</dbReference>
<dbReference type="InterPro" id="IPR011033">
    <property type="entry name" value="PRC_barrel-like_sf"/>
</dbReference>
<dbReference type="InterPro" id="IPR056792">
    <property type="entry name" value="PRC_RimM"/>
</dbReference>
<dbReference type="InterPro" id="IPR011961">
    <property type="entry name" value="RimM"/>
</dbReference>
<dbReference type="InterPro" id="IPR002676">
    <property type="entry name" value="RimM_N"/>
</dbReference>
<dbReference type="InterPro" id="IPR036976">
    <property type="entry name" value="RimM_N_sf"/>
</dbReference>
<dbReference type="InterPro" id="IPR009000">
    <property type="entry name" value="Transl_B-barrel_sf"/>
</dbReference>
<dbReference type="NCBIfam" id="TIGR02273">
    <property type="entry name" value="16S_RimM"/>
    <property type="match status" value="1"/>
</dbReference>
<dbReference type="PANTHER" id="PTHR33692">
    <property type="entry name" value="RIBOSOME MATURATION FACTOR RIMM"/>
    <property type="match status" value="1"/>
</dbReference>
<dbReference type="PANTHER" id="PTHR33692:SF1">
    <property type="entry name" value="RIBOSOME MATURATION FACTOR RIMM"/>
    <property type="match status" value="1"/>
</dbReference>
<dbReference type="Pfam" id="PF24986">
    <property type="entry name" value="PRC_RimM"/>
    <property type="match status" value="1"/>
</dbReference>
<dbReference type="Pfam" id="PF01782">
    <property type="entry name" value="RimM"/>
    <property type="match status" value="1"/>
</dbReference>
<dbReference type="SUPFAM" id="SSF50346">
    <property type="entry name" value="PRC-barrel domain"/>
    <property type="match status" value="1"/>
</dbReference>
<dbReference type="SUPFAM" id="SSF50447">
    <property type="entry name" value="Translation proteins"/>
    <property type="match status" value="1"/>
</dbReference>
<feature type="chain" id="PRO_1000116565" description="Ribosome maturation factor RimM">
    <location>
        <begin position="1"/>
        <end position="182"/>
    </location>
</feature>
<feature type="domain" description="PRC barrel" evidence="1">
    <location>
        <begin position="102"/>
        <end position="182"/>
    </location>
</feature>
<evidence type="ECO:0000255" key="1">
    <source>
        <dbReference type="HAMAP-Rule" id="MF_00014"/>
    </source>
</evidence>
<protein>
    <recommendedName>
        <fullName evidence="1">Ribosome maturation factor RimM</fullName>
    </recommendedName>
</protein>
<reference key="1">
    <citation type="journal article" date="2009" name="J. Bacteriol.">
        <title>Complete genome sequence and comparative genome analysis of enteropathogenic Escherichia coli O127:H6 strain E2348/69.</title>
        <authorList>
            <person name="Iguchi A."/>
            <person name="Thomson N.R."/>
            <person name="Ogura Y."/>
            <person name="Saunders D."/>
            <person name="Ooka T."/>
            <person name="Henderson I.R."/>
            <person name="Harris D."/>
            <person name="Asadulghani M."/>
            <person name="Kurokawa K."/>
            <person name="Dean P."/>
            <person name="Kenny B."/>
            <person name="Quail M.A."/>
            <person name="Thurston S."/>
            <person name="Dougan G."/>
            <person name="Hayashi T."/>
            <person name="Parkhill J."/>
            <person name="Frankel G."/>
        </authorList>
    </citation>
    <scope>NUCLEOTIDE SEQUENCE [LARGE SCALE GENOMIC DNA]</scope>
    <source>
        <strain>E2348/69 / EPEC</strain>
    </source>
</reference>
<sequence>MSKQLTAQAPVDPIVLGKMGSSYGIRGWLRVFSSTEDAESIFDYQPWFIQKAGQWQQVQLESWKHHNQDMIIKLKGVDDRDAANLLTNCEIVVDSSQLPQLEEGDYYWKDLMGCQVVTTEGYDLGKVVDMMETGSNDVLVIKANLKDAFGIKERLVPFLDGQVIKKVDLTTRSIEVDWDPGF</sequence>
<accession>B7UH57</accession>
<organism>
    <name type="scientific">Escherichia coli O127:H6 (strain E2348/69 / EPEC)</name>
    <dbReference type="NCBI Taxonomy" id="574521"/>
    <lineage>
        <taxon>Bacteria</taxon>
        <taxon>Pseudomonadati</taxon>
        <taxon>Pseudomonadota</taxon>
        <taxon>Gammaproteobacteria</taxon>
        <taxon>Enterobacterales</taxon>
        <taxon>Enterobacteriaceae</taxon>
        <taxon>Escherichia</taxon>
    </lineage>
</organism>
<name>RIMM_ECO27</name>
<keyword id="KW-0143">Chaperone</keyword>
<keyword id="KW-0963">Cytoplasm</keyword>
<keyword id="KW-1185">Reference proteome</keyword>
<keyword id="KW-0690">Ribosome biogenesis</keyword>
<keyword id="KW-0698">rRNA processing</keyword>
<proteinExistence type="inferred from homology"/>
<gene>
    <name evidence="1" type="primary">rimM</name>
    <name type="ordered locus">E2348C_2897</name>
</gene>